<comment type="function">
    <text evidence="1">Converts heme B (protoheme IX) to heme O by substitution of the vinyl group on carbon 2 of heme B porphyrin ring with a hydroxyethyl farnesyl side group.</text>
</comment>
<comment type="catalytic activity">
    <reaction evidence="1">
        <text>heme b + (2E,6E)-farnesyl diphosphate + H2O = Fe(II)-heme o + diphosphate</text>
        <dbReference type="Rhea" id="RHEA:28070"/>
        <dbReference type="ChEBI" id="CHEBI:15377"/>
        <dbReference type="ChEBI" id="CHEBI:33019"/>
        <dbReference type="ChEBI" id="CHEBI:60344"/>
        <dbReference type="ChEBI" id="CHEBI:60530"/>
        <dbReference type="ChEBI" id="CHEBI:175763"/>
        <dbReference type="EC" id="2.5.1.141"/>
    </reaction>
</comment>
<comment type="pathway">
    <text evidence="1">Porphyrin-containing compound metabolism; heme O biosynthesis; heme O from protoheme: step 1/1.</text>
</comment>
<comment type="subcellular location">
    <subcellularLocation>
        <location evidence="1">Cell inner membrane</location>
        <topology evidence="1">Multi-pass membrane protein</topology>
    </subcellularLocation>
</comment>
<comment type="miscellaneous">
    <text evidence="1">Carbon 2 of the heme B porphyrin ring is defined according to the Fischer nomenclature.</text>
</comment>
<comment type="similarity">
    <text evidence="1">Belongs to the UbiA prenyltransferase family. Protoheme IX farnesyltransferase subfamily.</text>
</comment>
<evidence type="ECO:0000255" key="1">
    <source>
        <dbReference type="HAMAP-Rule" id="MF_00154"/>
    </source>
</evidence>
<reference key="1">
    <citation type="journal article" date="2000" name="Nature">
        <title>Complete genome sequence of Pseudomonas aeruginosa PAO1, an opportunistic pathogen.</title>
        <authorList>
            <person name="Stover C.K."/>
            <person name="Pham X.-Q.T."/>
            <person name="Erwin A.L."/>
            <person name="Mizoguchi S.D."/>
            <person name="Warrener P."/>
            <person name="Hickey M.J."/>
            <person name="Brinkman F.S.L."/>
            <person name="Hufnagle W.O."/>
            <person name="Kowalik D.J."/>
            <person name="Lagrou M."/>
            <person name="Garber R.L."/>
            <person name="Goltry L."/>
            <person name="Tolentino E."/>
            <person name="Westbrock-Wadman S."/>
            <person name="Yuan Y."/>
            <person name="Brody L.L."/>
            <person name="Coulter S.N."/>
            <person name="Folger K.R."/>
            <person name="Kas A."/>
            <person name="Larbig K."/>
            <person name="Lim R.M."/>
            <person name="Smith K.A."/>
            <person name="Spencer D.H."/>
            <person name="Wong G.K.-S."/>
            <person name="Wu Z."/>
            <person name="Paulsen I.T."/>
            <person name="Reizer J."/>
            <person name="Saier M.H. Jr."/>
            <person name="Hancock R.E.W."/>
            <person name="Lory S."/>
            <person name="Olson M.V."/>
        </authorList>
    </citation>
    <scope>NUCLEOTIDE SEQUENCE [LARGE SCALE GENOMIC DNA]</scope>
    <source>
        <strain>ATCC 15692 / DSM 22644 / CIP 104116 / JCM 14847 / LMG 12228 / 1C / PRS 101 / PAO1</strain>
    </source>
</reference>
<dbReference type="EC" id="2.5.1.141" evidence="1"/>
<dbReference type="EMBL" id="AE004091">
    <property type="protein sequence ID" value="AAG03503.1"/>
    <property type="molecule type" value="Genomic_DNA"/>
</dbReference>
<dbReference type="PIR" id="F83632">
    <property type="entry name" value="F83632"/>
</dbReference>
<dbReference type="RefSeq" id="NP_248803.1">
    <property type="nucleotide sequence ID" value="NC_002516.2"/>
</dbReference>
<dbReference type="SMR" id="Q9I719"/>
<dbReference type="STRING" id="208964.PA0113"/>
<dbReference type="PaxDb" id="208964-PA0113"/>
<dbReference type="DNASU" id="879395"/>
<dbReference type="GeneID" id="879395"/>
<dbReference type="KEGG" id="pae:PA0113"/>
<dbReference type="PATRIC" id="fig|208964.12.peg.118"/>
<dbReference type="PseudoCAP" id="PA0113"/>
<dbReference type="HOGENOM" id="CLU_029631_0_2_6"/>
<dbReference type="InParanoid" id="Q9I719"/>
<dbReference type="OrthoDB" id="9814417at2"/>
<dbReference type="PhylomeDB" id="Q9I719"/>
<dbReference type="BioCyc" id="PAER208964:G1FZ6-115-MONOMER"/>
<dbReference type="UniPathway" id="UPA00834">
    <property type="reaction ID" value="UER00712"/>
</dbReference>
<dbReference type="Proteomes" id="UP000002438">
    <property type="component" value="Chromosome"/>
</dbReference>
<dbReference type="GO" id="GO:0005886">
    <property type="term" value="C:plasma membrane"/>
    <property type="evidence" value="ECO:0007669"/>
    <property type="project" value="UniProtKB-SubCell"/>
</dbReference>
<dbReference type="GO" id="GO:0008495">
    <property type="term" value="F:protoheme IX farnesyltransferase activity"/>
    <property type="evidence" value="ECO:0000318"/>
    <property type="project" value="GO_Central"/>
</dbReference>
<dbReference type="GO" id="GO:0006783">
    <property type="term" value="P:heme biosynthetic process"/>
    <property type="evidence" value="ECO:0000318"/>
    <property type="project" value="GO_Central"/>
</dbReference>
<dbReference type="GO" id="GO:0048034">
    <property type="term" value="P:heme O biosynthetic process"/>
    <property type="evidence" value="ECO:0007669"/>
    <property type="project" value="UniProtKB-UniRule"/>
</dbReference>
<dbReference type="CDD" id="cd13957">
    <property type="entry name" value="PT_UbiA_Cox10"/>
    <property type="match status" value="1"/>
</dbReference>
<dbReference type="FunFam" id="1.10.357.140:FF:000001">
    <property type="entry name" value="Protoheme IX farnesyltransferase"/>
    <property type="match status" value="1"/>
</dbReference>
<dbReference type="Gene3D" id="1.10.357.140">
    <property type="entry name" value="UbiA prenyltransferase"/>
    <property type="match status" value="1"/>
</dbReference>
<dbReference type="HAMAP" id="MF_00154">
    <property type="entry name" value="CyoE_CtaB"/>
    <property type="match status" value="1"/>
</dbReference>
<dbReference type="InterPro" id="IPR006369">
    <property type="entry name" value="Protohaem_IX_farnesylTrfase"/>
</dbReference>
<dbReference type="InterPro" id="IPR000537">
    <property type="entry name" value="UbiA_prenyltransferase"/>
</dbReference>
<dbReference type="InterPro" id="IPR030470">
    <property type="entry name" value="UbiA_prenylTrfase_CS"/>
</dbReference>
<dbReference type="InterPro" id="IPR044878">
    <property type="entry name" value="UbiA_sf"/>
</dbReference>
<dbReference type="NCBIfam" id="TIGR01473">
    <property type="entry name" value="cyoE_ctaB"/>
    <property type="match status" value="1"/>
</dbReference>
<dbReference type="NCBIfam" id="NF003349">
    <property type="entry name" value="PRK04375.1-2"/>
    <property type="match status" value="1"/>
</dbReference>
<dbReference type="PANTHER" id="PTHR43448:SF7">
    <property type="entry name" value="4-HYDROXYBENZOATE SOLANESYLTRANSFERASE"/>
    <property type="match status" value="1"/>
</dbReference>
<dbReference type="PANTHER" id="PTHR43448">
    <property type="entry name" value="PROTOHEME IX FARNESYLTRANSFERASE, MITOCHONDRIAL"/>
    <property type="match status" value="1"/>
</dbReference>
<dbReference type="Pfam" id="PF01040">
    <property type="entry name" value="UbiA"/>
    <property type="match status" value="1"/>
</dbReference>
<dbReference type="PROSITE" id="PS00943">
    <property type="entry name" value="UBIA"/>
    <property type="match status" value="1"/>
</dbReference>
<organism>
    <name type="scientific">Pseudomonas aeruginosa (strain ATCC 15692 / DSM 22644 / CIP 104116 / JCM 14847 / LMG 12228 / 1C / PRS 101 / PAO1)</name>
    <dbReference type="NCBI Taxonomy" id="208964"/>
    <lineage>
        <taxon>Bacteria</taxon>
        <taxon>Pseudomonadati</taxon>
        <taxon>Pseudomonadota</taxon>
        <taxon>Gammaproteobacteria</taxon>
        <taxon>Pseudomonadales</taxon>
        <taxon>Pseudomonadaceae</taxon>
        <taxon>Pseudomonas</taxon>
    </lineage>
</organism>
<proteinExistence type="inferred from homology"/>
<protein>
    <recommendedName>
        <fullName evidence="1">Protoheme IX farnesyltransferase 1</fullName>
        <ecNumber evidence="1">2.5.1.141</ecNumber>
    </recommendedName>
    <alternativeName>
        <fullName evidence="1">Heme B farnesyltransferase 1</fullName>
    </alternativeName>
    <alternativeName>
        <fullName evidence="1">Heme O synthase 1</fullName>
    </alternativeName>
</protein>
<name>CYOE1_PSEAE</name>
<keyword id="KW-0997">Cell inner membrane</keyword>
<keyword id="KW-1003">Cell membrane</keyword>
<keyword id="KW-0350">Heme biosynthesis</keyword>
<keyword id="KW-0472">Membrane</keyword>
<keyword id="KW-1185">Reference proteome</keyword>
<keyword id="KW-0808">Transferase</keyword>
<keyword id="KW-0812">Transmembrane</keyword>
<keyword id="KW-1133">Transmembrane helix</keyword>
<accession>Q9I719</accession>
<gene>
    <name evidence="1" type="primary">cyoE1</name>
    <name type="ordered locus">PA0113</name>
</gene>
<feature type="chain" id="PRO_0000326918" description="Protoheme IX farnesyltransferase 1">
    <location>
        <begin position="1"/>
        <end position="304"/>
    </location>
</feature>
<feature type="transmembrane region" description="Helical" evidence="1">
    <location>
        <begin position="24"/>
        <end position="44"/>
    </location>
</feature>
<feature type="transmembrane region" description="Helical" evidence="1">
    <location>
        <begin position="47"/>
        <end position="67"/>
    </location>
</feature>
<feature type="transmembrane region" description="Helical" evidence="1">
    <location>
        <begin position="99"/>
        <end position="119"/>
    </location>
</feature>
<feature type="transmembrane region" description="Helical" evidence="1">
    <location>
        <begin position="122"/>
        <end position="142"/>
    </location>
</feature>
<feature type="transmembrane region" description="Helical" evidence="1">
    <location>
        <begin position="150"/>
        <end position="170"/>
    </location>
</feature>
<feature type="transmembrane region" description="Helical" evidence="1">
    <location>
        <begin position="176"/>
        <end position="196"/>
    </location>
</feature>
<feature type="transmembrane region" description="Helical" evidence="1">
    <location>
        <begin position="228"/>
        <end position="248"/>
    </location>
</feature>
<feature type="transmembrane region" description="Helical" evidence="1">
    <location>
        <begin position="280"/>
        <end position="300"/>
    </location>
</feature>
<sequence>MATVIDRHSQPTWRDFLELTKPKVVVLMLITSLIGMLLATKAPLDGFVPWQVLIFGNLGIGLCAGAAAAVNHVVDRRIDSIMARTHKRPLAEGRVSPSMALGFALLLALAGMAVLLAFTNPLTAWLTLASLLGYAALYTGFLKRATPQNIVIGGLAGAAPPLLGWVAITGHLSAEPLLLVLIIFAWTPPHFWALCIHRKDEYAKADIPMLPVTHGERYTKLHILLYTLVLFAVSLMPFVIHMSGLVYLLCALALGARFLDWAWALYCDSRPHAAIKTFKYSIVYLFLLFMALLVDHYLPLKLLL</sequence>